<sequence>MSRVCQVSGKRVQTGNNVSHANNKTRRRFLPNLHERRFWVASENRWVKLRVSAHALRTIDKNGIDSVLAELRARGEKV</sequence>
<gene>
    <name evidence="1" type="primary">rpmB</name>
    <name type="ordered locus">Smlt4599</name>
</gene>
<accession>B2FNE3</accession>
<name>RL28_STRMK</name>
<reference key="1">
    <citation type="journal article" date="2008" name="Genome Biol.">
        <title>The complete genome, comparative and functional analysis of Stenotrophomonas maltophilia reveals an organism heavily shielded by drug resistance determinants.</title>
        <authorList>
            <person name="Crossman L.C."/>
            <person name="Gould V.C."/>
            <person name="Dow J.M."/>
            <person name="Vernikos G.S."/>
            <person name="Okazaki A."/>
            <person name="Sebaihia M."/>
            <person name="Saunders D."/>
            <person name="Arrowsmith C."/>
            <person name="Carver T."/>
            <person name="Peters N."/>
            <person name="Adlem E."/>
            <person name="Kerhornou A."/>
            <person name="Lord A."/>
            <person name="Murphy L."/>
            <person name="Seeger K."/>
            <person name="Squares R."/>
            <person name="Rutter S."/>
            <person name="Quail M.A."/>
            <person name="Rajandream M.A."/>
            <person name="Harris D."/>
            <person name="Churcher C."/>
            <person name="Bentley S.D."/>
            <person name="Parkhill J."/>
            <person name="Thomson N.R."/>
            <person name="Avison M.B."/>
        </authorList>
    </citation>
    <scope>NUCLEOTIDE SEQUENCE [LARGE SCALE GENOMIC DNA]</scope>
    <source>
        <strain>K279a</strain>
    </source>
</reference>
<keyword id="KW-1185">Reference proteome</keyword>
<keyword id="KW-0687">Ribonucleoprotein</keyword>
<keyword id="KW-0689">Ribosomal protein</keyword>
<feature type="chain" id="PRO_1000121693" description="Large ribosomal subunit protein bL28">
    <location>
        <begin position="1"/>
        <end position="78"/>
    </location>
</feature>
<feature type="region of interest" description="Disordered" evidence="2">
    <location>
        <begin position="1"/>
        <end position="23"/>
    </location>
</feature>
<feature type="compositionally biased region" description="Polar residues" evidence="2">
    <location>
        <begin position="11"/>
        <end position="22"/>
    </location>
</feature>
<comment type="similarity">
    <text evidence="1">Belongs to the bacterial ribosomal protein bL28 family.</text>
</comment>
<proteinExistence type="inferred from homology"/>
<dbReference type="EMBL" id="AM743169">
    <property type="protein sequence ID" value="CAQ47954.1"/>
    <property type="molecule type" value="Genomic_DNA"/>
</dbReference>
<dbReference type="RefSeq" id="WP_005411638.1">
    <property type="nucleotide sequence ID" value="NC_010943.1"/>
</dbReference>
<dbReference type="SMR" id="B2FNE3"/>
<dbReference type="EnsemblBacteria" id="CAQ47954">
    <property type="protein sequence ID" value="CAQ47954"/>
    <property type="gene ID" value="Smlt4599"/>
</dbReference>
<dbReference type="GeneID" id="97263201"/>
<dbReference type="KEGG" id="sml:Smlt4599"/>
<dbReference type="eggNOG" id="COG0227">
    <property type="taxonomic scope" value="Bacteria"/>
</dbReference>
<dbReference type="HOGENOM" id="CLU_064548_3_1_6"/>
<dbReference type="Proteomes" id="UP000008840">
    <property type="component" value="Chromosome"/>
</dbReference>
<dbReference type="GO" id="GO:0022625">
    <property type="term" value="C:cytosolic large ribosomal subunit"/>
    <property type="evidence" value="ECO:0007669"/>
    <property type="project" value="TreeGrafter"/>
</dbReference>
<dbReference type="GO" id="GO:0003735">
    <property type="term" value="F:structural constituent of ribosome"/>
    <property type="evidence" value="ECO:0007669"/>
    <property type="project" value="InterPro"/>
</dbReference>
<dbReference type="GO" id="GO:0006412">
    <property type="term" value="P:translation"/>
    <property type="evidence" value="ECO:0007669"/>
    <property type="project" value="UniProtKB-UniRule"/>
</dbReference>
<dbReference type="FunFam" id="2.30.170.40:FF:000001">
    <property type="entry name" value="50S ribosomal protein L28"/>
    <property type="match status" value="1"/>
</dbReference>
<dbReference type="Gene3D" id="2.30.170.40">
    <property type="entry name" value="Ribosomal protein L28/L24"/>
    <property type="match status" value="1"/>
</dbReference>
<dbReference type="HAMAP" id="MF_00373">
    <property type="entry name" value="Ribosomal_bL28"/>
    <property type="match status" value="1"/>
</dbReference>
<dbReference type="InterPro" id="IPR026569">
    <property type="entry name" value="Ribosomal_bL28"/>
</dbReference>
<dbReference type="InterPro" id="IPR034704">
    <property type="entry name" value="Ribosomal_bL28/bL31-like_sf"/>
</dbReference>
<dbReference type="InterPro" id="IPR001383">
    <property type="entry name" value="Ribosomal_bL28_bact-type"/>
</dbReference>
<dbReference type="InterPro" id="IPR037147">
    <property type="entry name" value="Ribosomal_bL28_sf"/>
</dbReference>
<dbReference type="NCBIfam" id="TIGR00009">
    <property type="entry name" value="L28"/>
    <property type="match status" value="1"/>
</dbReference>
<dbReference type="PANTHER" id="PTHR13528">
    <property type="entry name" value="39S RIBOSOMAL PROTEIN L28, MITOCHONDRIAL"/>
    <property type="match status" value="1"/>
</dbReference>
<dbReference type="PANTHER" id="PTHR13528:SF2">
    <property type="entry name" value="LARGE RIBOSOMAL SUBUNIT PROTEIN BL28M"/>
    <property type="match status" value="1"/>
</dbReference>
<dbReference type="Pfam" id="PF00830">
    <property type="entry name" value="Ribosomal_L28"/>
    <property type="match status" value="1"/>
</dbReference>
<dbReference type="SUPFAM" id="SSF143800">
    <property type="entry name" value="L28p-like"/>
    <property type="match status" value="1"/>
</dbReference>
<evidence type="ECO:0000255" key="1">
    <source>
        <dbReference type="HAMAP-Rule" id="MF_00373"/>
    </source>
</evidence>
<evidence type="ECO:0000256" key="2">
    <source>
        <dbReference type="SAM" id="MobiDB-lite"/>
    </source>
</evidence>
<evidence type="ECO:0000305" key="3"/>
<organism>
    <name type="scientific">Stenotrophomonas maltophilia (strain K279a)</name>
    <dbReference type="NCBI Taxonomy" id="522373"/>
    <lineage>
        <taxon>Bacteria</taxon>
        <taxon>Pseudomonadati</taxon>
        <taxon>Pseudomonadota</taxon>
        <taxon>Gammaproteobacteria</taxon>
        <taxon>Lysobacterales</taxon>
        <taxon>Lysobacteraceae</taxon>
        <taxon>Stenotrophomonas</taxon>
        <taxon>Stenotrophomonas maltophilia group</taxon>
    </lineage>
</organism>
<protein>
    <recommendedName>
        <fullName evidence="1">Large ribosomal subunit protein bL28</fullName>
    </recommendedName>
    <alternativeName>
        <fullName evidence="3">50S ribosomal protein L28</fullName>
    </alternativeName>
</protein>